<protein>
    <recommendedName>
        <fullName evidence="1">3-isopropylmalate dehydrogenase</fullName>
        <ecNumber evidence="1">1.1.1.85</ecNumber>
    </recommendedName>
    <alternativeName>
        <fullName evidence="1">3-IPM-DH</fullName>
    </alternativeName>
    <alternativeName>
        <fullName evidence="1">Beta-IPM dehydrogenase</fullName>
        <shortName evidence="1">IMDH</shortName>
    </alternativeName>
</protein>
<accession>Q8DTG3</accession>
<name>LEU3_STRMU</name>
<sequence>MKKIVTLAGDGIGPEIMAAGLEVFDAVAQKINFDYEIEAKAFGGAGIDASGHPLPDDTLAAAKTADAILLAAIGSPQYDKAPVRPEQGLLAIRKELNLFANIRPVRIFDALRHLSPLKAERIAGVDFVVVRELTGGIYFGQHTLTENSACDINEYSASEIRRIMRKAFAIARGRSKKVTSIDKQNVLATSKLWRQIAEEVAKEYSDVTLEHQLVDSAAMVMITNPACFDVVVTENLFGDILSDESSVLPGTLGVMPSASHSESGPSLYEPIHGSAPDIAGKGIANPISMILSVAMMLRDSFGETAGAEMIEHAVNKTLTQGILTRDLGGLANTKQMTAAIIANL</sequence>
<gene>
    <name evidence="1" type="primary">leuB</name>
    <name type="ordered locus">SMU_1383</name>
</gene>
<comment type="function">
    <text evidence="1">Catalyzes the oxidation of 3-carboxy-2-hydroxy-4-methylpentanoate (3-isopropylmalate) to 3-carboxy-4-methyl-2-oxopentanoate. The product decarboxylates to 4-methyl-2 oxopentanoate.</text>
</comment>
<comment type="catalytic activity">
    <reaction evidence="1">
        <text>(2R,3S)-3-isopropylmalate + NAD(+) = 4-methyl-2-oxopentanoate + CO2 + NADH</text>
        <dbReference type="Rhea" id="RHEA:32271"/>
        <dbReference type="ChEBI" id="CHEBI:16526"/>
        <dbReference type="ChEBI" id="CHEBI:17865"/>
        <dbReference type="ChEBI" id="CHEBI:35121"/>
        <dbReference type="ChEBI" id="CHEBI:57540"/>
        <dbReference type="ChEBI" id="CHEBI:57945"/>
        <dbReference type="EC" id="1.1.1.85"/>
    </reaction>
</comment>
<comment type="cofactor">
    <cofactor evidence="1">
        <name>Mg(2+)</name>
        <dbReference type="ChEBI" id="CHEBI:18420"/>
    </cofactor>
    <cofactor evidence="1">
        <name>Mn(2+)</name>
        <dbReference type="ChEBI" id="CHEBI:29035"/>
    </cofactor>
    <text evidence="1">Binds 1 Mg(2+) or Mn(2+) ion per subunit.</text>
</comment>
<comment type="pathway">
    <text evidence="1">Amino-acid biosynthesis; L-leucine biosynthesis; L-leucine from 3-methyl-2-oxobutanoate: step 3/4.</text>
</comment>
<comment type="subunit">
    <text evidence="1">Homodimer.</text>
</comment>
<comment type="subcellular location">
    <subcellularLocation>
        <location evidence="1">Cytoplasm</location>
    </subcellularLocation>
</comment>
<comment type="similarity">
    <text evidence="1">Belongs to the isocitrate and isopropylmalate dehydrogenases family. LeuB type 1 subfamily.</text>
</comment>
<dbReference type="EC" id="1.1.1.85" evidence="1"/>
<dbReference type="EMBL" id="AE014133">
    <property type="protein sequence ID" value="AAN59050.1"/>
    <property type="molecule type" value="Genomic_DNA"/>
</dbReference>
<dbReference type="RefSeq" id="NP_721744.1">
    <property type="nucleotide sequence ID" value="NC_004350.2"/>
</dbReference>
<dbReference type="RefSeq" id="WP_002262707.1">
    <property type="nucleotide sequence ID" value="NC_004350.2"/>
</dbReference>
<dbReference type="SMR" id="Q8DTG3"/>
<dbReference type="STRING" id="210007.SMU_1383"/>
<dbReference type="KEGG" id="smu:SMU_1383"/>
<dbReference type="PATRIC" id="fig|210007.7.peg.1230"/>
<dbReference type="eggNOG" id="COG0473">
    <property type="taxonomic scope" value="Bacteria"/>
</dbReference>
<dbReference type="HOGENOM" id="CLU_031953_0_3_9"/>
<dbReference type="OrthoDB" id="9806254at2"/>
<dbReference type="PhylomeDB" id="Q8DTG3"/>
<dbReference type="UniPathway" id="UPA00048">
    <property type="reaction ID" value="UER00072"/>
</dbReference>
<dbReference type="Proteomes" id="UP000002512">
    <property type="component" value="Chromosome"/>
</dbReference>
<dbReference type="GO" id="GO:0005829">
    <property type="term" value="C:cytosol"/>
    <property type="evidence" value="ECO:0007669"/>
    <property type="project" value="TreeGrafter"/>
</dbReference>
<dbReference type="GO" id="GO:0003862">
    <property type="term" value="F:3-isopropylmalate dehydrogenase activity"/>
    <property type="evidence" value="ECO:0007669"/>
    <property type="project" value="UniProtKB-UniRule"/>
</dbReference>
<dbReference type="GO" id="GO:0000287">
    <property type="term" value="F:magnesium ion binding"/>
    <property type="evidence" value="ECO:0007669"/>
    <property type="project" value="InterPro"/>
</dbReference>
<dbReference type="GO" id="GO:0051287">
    <property type="term" value="F:NAD binding"/>
    <property type="evidence" value="ECO:0007669"/>
    <property type="project" value="InterPro"/>
</dbReference>
<dbReference type="GO" id="GO:0009098">
    <property type="term" value="P:L-leucine biosynthetic process"/>
    <property type="evidence" value="ECO:0007669"/>
    <property type="project" value="UniProtKB-UniRule"/>
</dbReference>
<dbReference type="FunFam" id="3.40.718.10:FF:000006">
    <property type="entry name" value="3-isopropylmalate dehydrogenase"/>
    <property type="match status" value="1"/>
</dbReference>
<dbReference type="Gene3D" id="3.40.718.10">
    <property type="entry name" value="Isopropylmalate Dehydrogenase"/>
    <property type="match status" value="1"/>
</dbReference>
<dbReference type="HAMAP" id="MF_01033">
    <property type="entry name" value="LeuB_type1"/>
    <property type="match status" value="1"/>
</dbReference>
<dbReference type="InterPro" id="IPR019818">
    <property type="entry name" value="IsoCit/isopropylmalate_DH_CS"/>
</dbReference>
<dbReference type="InterPro" id="IPR024084">
    <property type="entry name" value="IsoPropMal-DH-like_dom"/>
</dbReference>
<dbReference type="InterPro" id="IPR004429">
    <property type="entry name" value="Isopropylmalate_DH"/>
</dbReference>
<dbReference type="NCBIfam" id="TIGR00169">
    <property type="entry name" value="leuB"/>
    <property type="match status" value="1"/>
</dbReference>
<dbReference type="PANTHER" id="PTHR42979">
    <property type="entry name" value="3-ISOPROPYLMALATE DEHYDROGENASE"/>
    <property type="match status" value="1"/>
</dbReference>
<dbReference type="PANTHER" id="PTHR42979:SF1">
    <property type="entry name" value="3-ISOPROPYLMALATE DEHYDROGENASE"/>
    <property type="match status" value="1"/>
</dbReference>
<dbReference type="Pfam" id="PF00180">
    <property type="entry name" value="Iso_dh"/>
    <property type="match status" value="1"/>
</dbReference>
<dbReference type="SMART" id="SM01329">
    <property type="entry name" value="Iso_dh"/>
    <property type="match status" value="1"/>
</dbReference>
<dbReference type="SUPFAM" id="SSF53659">
    <property type="entry name" value="Isocitrate/Isopropylmalate dehydrogenase-like"/>
    <property type="match status" value="1"/>
</dbReference>
<dbReference type="PROSITE" id="PS00470">
    <property type="entry name" value="IDH_IMDH"/>
    <property type="match status" value="1"/>
</dbReference>
<proteinExistence type="inferred from homology"/>
<organism>
    <name type="scientific">Streptococcus mutans serotype c (strain ATCC 700610 / UA159)</name>
    <dbReference type="NCBI Taxonomy" id="210007"/>
    <lineage>
        <taxon>Bacteria</taxon>
        <taxon>Bacillati</taxon>
        <taxon>Bacillota</taxon>
        <taxon>Bacilli</taxon>
        <taxon>Lactobacillales</taxon>
        <taxon>Streptococcaceae</taxon>
        <taxon>Streptococcus</taxon>
    </lineage>
</organism>
<reference key="1">
    <citation type="journal article" date="2002" name="Proc. Natl. Acad. Sci. U.S.A.">
        <title>Genome sequence of Streptococcus mutans UA159, a cariogenic dental pathogen.</title>
        <authorList>
            <person name="Ajdic D.J."/>
            <person name="McShan W.M."/>
            <person name="McLaughlin R.E."/>
            <person name="Savic G."/>
            <person name="Chang J."/>
            <person name="Carson M.B."/>
            <person name="Primeaux C."/>
            <person name="Tian R."/>
            <person name="Kenton S."/>
            <person name="Jia H.G."/>
            <person name="Lin S.P."/>
            <person name="Qian Y."/>
            <person name="Li S."/>
            <person name="Zhu H."/>
            <person name="Najar F.Z."/>
            <person name="Lai H."/>
            <person name="White J."/>
            <person name="Roe B.A."/>
            <person name="Ferretti J.J."/>
        </authorList>
    </citation>
    <scope>NUCLEOTIDE SEQUENCE [LARGE SCALE GENOMIC DNA]</scope>
    <source>
        <strain>ATCC 700610 / UA159</strain>
    </source>
</reference>
<feature type="chain" id="PRO_0000083761" description="3-isopropylmalate dehydrogenase">
    <location>
        <begin position="1"/>
        <end position="344"/>
    </location>
</feature>
<feature type="binding site" evidence="1">
    <location>
        <position position="93"/>
    </location>
    <ligand>
        <name>substrate</name>
    </ligand>
</feature>
<feature type="binding site" evidence="1">
    <location>
        <position position="103"/>
    </location>
    <ligand>
        <name>substrate</name>
    </ligand>
</feature>
<feature type="binding site" evidence="1">
    <location>
        <position position="131"/>
    </location>
    <ligand>
        <name>substrate</name>
    </ligand>
</feature>
<feature type="binding site" evidence="1">
    <location>
        <position position="215"/>
    </location>
    <ligand>
        <name>Mg(2+)</name>
        <dbReference type="ChEBI" id="CHEBI:18420"/>
    </ligand>
</feature>
<feature type="binding site" evidence="1">
    <location>
        <position position="215"/>
    </location>
    <ligand>
        <name>substrate</name>
    </ligand>
</feature>
<feature type="binding site" evidence="1">
    <location>
        <position position="239"/>
    </location>
    <ligand>
        <name>Mg(2+)</name>
        <dbReference type="ChEBI" id="CHEBI:18420"/>
    </ligand>
</feature>
<feature type="binding site" evidence="1">
    <location>
        <position position="243"/>
    </location>
    <ligand>
        <name>Mg(2+)</name>
        <dbReference type="ChEBI" id="CHEBI:18420"/>
    </ligand>
</feature>
<feature type="binding site" evidence="1">
    <location>
        <begin position="273"/>
        <end position="285"/>
    </location>
    <ligand>
        <name>NAD(+)</name>
        <dbReference type="ChEBI" id="CHEBI:57540"/>
    </ligand>
</feature>
<feature type="site" description="Important for catalysis" evidence="1">
    <location>
        <position position="138"/>
    </location>
</feature>
<feature type="site" description="Important for catalysis" evidence="1">
    <location>
        <position position="183"/>
    </location>
</feature>
<keyword id="KW-0028">Amino-acid biosynthesis</keyword>
<keyword id="KW-0100">Branched-chain amino acid biosynthesis</keyword>
<keyword id="KW-0963">Cytoplasm</keyword>
<keyword id="KW-0432">Leucine biosynthesis</keyword>
<keyword id="KW-0460">Magnesium</keyword>
<keyword id="KW-0464">Manganese</keyword>
<keyword id="KW-0479">Metal-binding</keyword>
<keyword id="KW-0520">NAD</keyword>
<keyword id="KW-0560">Oxidoreductase</keyword>
<keyword id="KW-1185">Reference proteome</keyword>
<evidence type="ECO:0000255" key="1">
    <source>
        <dbReference type="HAMAP-Rule" id="MF_01033"/>
    </source>
</evidence>